<proteinExistence type="inferred from homology"/>
<dbReference type="EMBL" id="CP000029">
    <property type="protein sequence ID" value="AAW54031.1"/>
    <property type="molecule type" value="Genomic_DNA"/>
</dbReference>
<dbReference type="RefSeq" id="WP_002494345.1">
    <property type="nucleotide sequence ID" value="NC_002976.3"/>
</dbReference>
<dbReference type="SMR" id="Q5HQE8"/>
<dbReference type="STRING" id="176279.SERP0605"/>
<dbReference type="KEGG" id="ser:SERP0605"/>
<dbReference type="eggNOG" id="COG2814">
    <property type="taxonomic scope" value="Bacteria"/>
</dbReference>
<dbReference type="HOGENOM" id="CLU_054518_0_0_9"/>
<dbReference type="UniPathway" id="UPA00556"/>
<dbReference type="Proteomes" id="UP000000531">
    <property type="component" value="Chromosome"/>
</dbReference>
<dbReference type="GO" id="GO:0005886">
    <property type="term" value="C:plasma membrane"/>
    <property type="evidence" value="ECO:0007669"/>
    <property type="project" value="UniProtKB-SubCell"/>
</dbReference>
<dbReference type="GO" id="GO:0015297">
    <property type="term" value="F:antiporter activity"/>
    <property type="evidence" value="ECO:0007669"/>
    <property type="project" value="UniProtKB-KW"/>
</dbReference>
<dbReference type="GO" id="GO:0006869">
    <property type="term" value="P:lipid transport"/>
    <property type="evidence" value="ECO:0007669"/>
    <property type="project" value="UniProtKB-KW"/>
</dbReference>
<dbReference type="GO" id="GO:0070395">
    <property type="term" value="P:lipoteichoic acid biosynthetic process"/>
    <property type="evidence" value="ECO:0007669"/>
    <property type="project" value="UniProtKB-UniPathway"/>
</dbReference>
<dbReference type="CDD" id="cd17325">
    <property type="entry name" value="MFS_MdtG_SLC18_like"/>
    <property type="match status" value="1"/>
</dbReference>
<dbReference type="Gene3D" id="1.20.1250.20">
    <property type="entry name" value="MFS general substrate transporter like domains"/>
    <property type="match status" value="2"/>
</dbReference>
<dbReference type="InterPro" id="IPR050495">
    <property type="entry name" value="ATG22/LtaA_families"/>
</dbReference>
<dbReference type="InterPro" id="IPR011701">
    <property type="entry name" value="MFS"/>
</dbReference>
<dbReference type="InterPro" id="IPR020846">
    <property type="entry name" value="MFS_dom"/>
</dbReference>
<dbReference type="InterPro" id="IPR036259">
    <property type="entry name" value="MFS_trans_sf"/>
</dbReference>
<dbReference type="NCBIfam" id="NF047396">
    <property type="entry name" value="MFS_flip_LtaA"/>
    <property type="match status" value="1"/>
</dbReference>
<dbReference type="PANTHER" id="PTHR23519">
    <property type="entry name" value="AUTOPHAGY-RELATED PROTEIN 22"/>
    <property type="match status" value="1"/>
</dbReference>
<dbReference type="PANTHER" id="PTHR23519:SF1">
    <property type="entry name" value="AUTOPHAGY-RELATED PROTEIN 22"/>
    <property type="match status" value="1"/>
</dbReference>
<dbReference type="Pfam" id="PF07690">
    <property type="entry name" value="MFS_1"/>
    <property type="match status" value="1"/>
</dbReference>
<dbReference type="SUPFAM" id="SSF103473">
    <property type="entry name" value="MFS general substrate transporter"/>
    <property type="match status" value="1"/>
</dbReference>
<dbReference type="PROSITE" id="PS50850">
    <property type="entry name" value="MFS"/>
    <property type="match status" value="1"/>
</dbReference>
<comment type="function">
    <text evidence="1">Proton-coupled antiporter flippase that catalyzes the translocation, from the inner to the outer leaflet of the cell membrane, of the lipid-linked disaccharide (anchor-LLD) that anchors lipoteichoic acids (LTA) to the cell membrane.</text>
</comment>
<comment type="pathway">
    <text evidence="1">Cell wall biogenesis; lipoteichoic acid biosynthesis.</text>
</comment>
<comment type="subcellular location">
    <subcellularLocation>
        <location evidence="1">Cell membrane</location>
        <topology evidence="1">Multi-pass membrane protein</topology>
    </subcellularLocation>
</comment>
<comment type="similarity">
    <text evidence="3">Belongs to the major facilitator superfamily. LtaA family.</text>
</comment>
<keyword id="KW-0050">Antiport</keyword>
<keyword id="KW-1003">Cell membrane</keyword>
<keyword id="KW-0445">Lipid transport</keyword>
<keyword id="KW-0472">Membrane</keyword>
<keyword id="KW-1185">Reference proteome</keyword>
<keyword id="KW-0812">Transmembrane</keyword>
<keyword id="KW-1133">Transmembrane helix</keyword>
<keyword id="KW-0813">Transport</keyword>
<keyword id="KW-0843">Virulence</keyword>
<sequence>MQDSSSSNYSSNRNFVMMLVILFLMEFARGMYILSYINFLPTVTSIAIAITSFAFSIHFIADAATNFVIGFLLKKFGSKLVLTSGFLLAFISLFLVIWFPASPFIIIFSAIMLGIAVSPIWVIMLSSVDERNRGKQMGYVYFSWLLGLLVGMVIMNLLIKFHPTRFAFLMALVVLIAWVLYYFVNINLTNYNTKPVKAQLKQIVDVTQRHLILFPGILLQGAAIAALVPILPKYATQVVKVSTVEYTVAIIIGGIGCAFSMLFLSKIIDNNSKGFMYGVIFSGFILYTILIFGLSTITNIYIVWAIGLFIGLMYGILLPAWNTFMAGHINPNEQEETWGVFNSVQGFGSMIGPLVGGLITQFTNNLNNTFYFSAMIFLALAVFYGYYFIKTNRRVKP</sequence>
<evidence type="ECO:0000250" key="1">
    <source>
        <dbReference type="UniProtKB" id="Q2FZP8"/>
    </source>
</evidence>
<evidence type="ECO:0000255" key="2"/>
<evidence type="ECO:0000305" key="3"/>
<feature type="chain" id="PRO_0000287162" description="Proton-coupled antiporter flippase LtaA">
    <location>
        <begin position="1"/>
        <end position="397"/>
    </location>
</feature>
<feature type="transmembrane region" description="Helical" evidence="2">
    <location>
        <begin position="15"/>
        <end position="34"/>
    </location>
</feature>
<feature type="transmembrane region" description="Helical" evidence="2">
    <location>
        <begin position="46"/>
        <end position="73"/>
    </location>
</feature>
<feature type="transmembrane region" description="Helical" evidence="2">
    <location>
        <begin position="80"/>
        <end position="99"/>
    </location>
</feature>
<feature type="transmembrane region" description="Helical" evidence="2">
    <location>
        <begin position="105"/>
        <end position="126"/>
    </location>
</feature>
<feature type="transmembrane region" description="Helical" evidence="2">
    <location>
        <begin position="138"/>
        <end position="159"/>
    </location>
</feature>
<feature type="transmembrane region" description="Helical" evidence="2">
    <location>
        <begin position="165"/>
        <end position="184"/>
    </location>
</feature>
<feature type="transmembrane region" description="Helical" evidence="2">
    <location>
        <begin position="211"/>
        <end position="231"/>
    </location>
</feature>
<feature type="transmembrane region" description="Helical" evidence="2">
    <location>
        <begin position="243"/>
        <end position="263"/>
    </location>
</feature>
<feature type="transmembrane region" description="Helical" evidence="2">
    <location>
        <begin position="275"/>
        <end position="294"/>
    </location>
</feature>
<feature type="transmembrane region" description="Helical" evidence="2">
    <location>
        <begin position="300"/>
        <end position="320"/>
    </location>
</feature>
<feature type="transmembrane region" description="Helical" evidence="2">
    <location>
        <begin position="340"/>
        <end position="363"/>
    </location>
</feature>
<feature type="transmembrane region" description="Helical" evidence="2">
    <location>
        <begin position="369"/>
        <end position="389"/>
    </location>
</feature>
<gene>
    <name type="primary">ltaA</name>
    <name type="ordered locus">SERP0605</name>
</gene>
<accession>Q5HQE8</accession>
<organism>
    <name type="scientific">Staphylococcus epidermidis (strain ATCC 35984 / DSM 28319 / BCRC 17069 / CCUG 31568 / BM 3577 / RP62A)</name>
    <dbReference type="NCBI Taxonomy" id="176279"/>
    <lineage>
        <taxon>Bacteria</taxon>
        <taxon>Bacillati</taxon>
        <taxon>Bacillota</taxon>
        <taxon>Bacilli</taxon>
        <taxon>Bacillales</taxon>
        <taxon>Staphylococcaceae</taxon>
        <taxon>Staphylococcus</taxon>
    </lineage>
</organism>
<name>LTAA_STAEQ</name>
<reference key="1">
    <citation type="journal article" date="2005" name="J. Bacteriol.">
        <title>Insights on evolution of virulence and resistance from the complete genome analysis of an early methicillin-resistant Staphylococcus aureus strain and a biofilm-producing methicillin-resistant Staphylococcus epidermidis strain.</title>
        <authorList>
            <person name="Gill S.R."/>
            <person name="Fouts D.E."/>
            <person name="Archer G.L."/>
            <person name="Mongodin E.F."/>
            <person name="DeBoy R.T."/>
            <person name="Ravel J."/>
            <person name="Paulsen I.T."/>
            <person name="Kolonay J.F."/>
            <person name="Brinkac L.M."/>
            <person name="Beanan M.J."/>
            <person name="Dodson R.J."/>
            <person name="Daugherty S.C."/>
            <person name="Madupu R."/>
            <person name="Angiuoli S.V."/>
            <person name="Durkin A.S."/>
            <person name="Haft D.H."/>
            <person name="Vamathevan J.J."/>
            <person name="Khouri H."/>
            <person name="Utterback T.R."/>
            <person name="Lee C."/>
            <person name="Dimitrov G."/>
            <person name="Jiang L."/>
            <person name="Qin H."/>
            <person name="Weidman J."/>
            <person name="Tran K."/>
            <person name="Kang K.H."/>
            <person name="Hance I.R."/>
            <person name="Nelson K.E."/>
            <person name="Fraser C.M."/>
        </authorList>
    </citation>
    <scope>NUCLEOTIDE SEQUENCE [LARGE SCALE GENOMIC DNA]</scope>
    <source>
        <strain>ATCC 35984 / DSM 28319 / BCRC 17069 / CCUG 31568 / BM 3577 / RP62A</strain>
    </source>
</reference>
<protein>
    <recommendedName>
        <fullName evidence="1">Proton-coupled antiporter flippase LtaA</fullName>
    </recommendedName>
    <alternativeName>
        <fullName evidence="1">Lipoteichoic acid protein A</fullName>
    </alternativeName>
</protein>